<sequence>MNFTKLFAIVLLAALVLLGQTEAGGLKKLGKKLEGVGKRVFKASEKALPVAVGIKALGK</sequence>
<feature type="signal peptide" evidence="1">
    <location>
        <begin position="1"/>
        <end position="23"/>
    </location>
</feature>
<feature type="chain" id="PRO_0000004812" description="Cecropin-A1">
    <location>
        <begin position="24"/>
        <end position="58"/>
    </location>
</feature>
<reference key="1">
    <citation type="journal article" date="1999" name="FEBS Lett.">
        <title>Cloning and expression of three cecropin cDNAs from a mosquito cell line.</title>
        <authorList>
            <person name="Sun D."/>
            <person name="Eccleston E.D."/>
            <person name="Fallon A.M."/>
        </authorList>
    </citation>
    <scope>NUCLEOTIDE SEQUENCE [MRNA]</scope>
</reference>
<reference key="2">
    <citation type="submission" date="2001-06" db="EMBL/GenBank/DDBJ databases">
        <title>Characterization of genomic DNA encoding mosquito cecropins.</title>
        <authorList>
            <person name="Sun D."/>
            <person name="Fallon A.M."/>
        </authorList>
    </citation>
    <scope>NUCLEOTIDE SEQUENCE [GENOMIC DNA]</scope>
</reference>
<reference key="3">
    <citation type="journal article" date="1998" name="Biochem. Biophys. Res. Commun.">
        <title>Peptide sequence of an antibiotic cecropin from the vector mosquito, Aedes albopictus.</title>
        <authorList>
            <person name="Sun D."/>
            <person name="Eccleston E.D."/>
            <person name="Fallon A.M."/>
        </authorList>
    </citation>
    <scope>PROTEIN SEQUENCE OF 24-58</scope>
</reference>
<gene>
    <name type="primary">CECA1</name>
    <name type="synonym">CECA</name>
</gene>
<dbReference type="EMBL" id="AF145802">
    <property type="protein sequence ID" value="AAD37701.1"/>
    <property type="molecule type" value="mRNA"/>
</dbReference>
<dbReference type="EMBL" id="AF394744">
    <property type="protein sequence ID" value="AAK81849.1"/>
    <property type="molecule type" value="Genomic_DNA"/>
</dbReference>
<dbReference type="SMR" id="P81417"/>
<dbReference type="Proteomes" id="UP000069940">
    <property type="component" value="Unassembled WGS sequence"/>
</dbReference>
<dbReference type="GO" id="GO:0005615">
    <property type="term" value="C:extracellular space"/>
    <property type="evidence" value="ECO:0007669"/>
    <property type="project" value="TreeGrafter"/>
</dbReference>
<dbReference type="GO" id="GO:0019731">
    <property type="term" value="P:antibacterial humoral response"/>
    <property type="evidence" value="ECO:0007669"/>
    <property type="project" value="InterPro"/>
</dbReference>
<dbReference type="GO" id="GO:0050829">
    <property type="term" value="P:defense response to Gram-negative bacterium"/>
    <property type="evidence" value="ECO:0007669"/>
    <property type="project" value="TreeGrafter"/>
</dbReference>
<dbReference type="GO" id="GO:0050830">
    <property type="term" value="P:defense response to Gram-positive bacterium"/>
    <property type="evidence" value="ECO:0007669"/>
    <property type="project" value="UniProtKB-ARBA"/>
</dbReference>
<dbReference type="GO" id="GO:0045087">
    <property type="term" value="P:innate immune response"/>
    <property type="evidence" value="ECO:0007669"/>
    <property type="project" value="UniProtKB-KW"/>
</dbReference>
<dbReference type="InterPro" id="IPR000875">
    <property type="entry name" value="Cecropin"/>
</dbReference>
<dbReference type="InterPro" id="IPR020400">
    <property type="entry name" value="Cecropin_insect"/>
</dbReference>
<dbReference type="PANTHER" id="PTHR38329">
    <property type="entry name" value="CECROPIN-A1-RELATED"/>
    <property type="match status" value="1"/>
</dbReference>
<dbReference type="PANTHER" id="PTHR38329:SF1">
    <property type="entry name" value="CECROPIN-A1-RELATED"/>
    <property type="match status" value="1"/>
</dbReference>
<dbReference type="Pfam" id="PF00272">
    <property type="entry name" value="Cecropin"/>
    <property type="match status" value="1"/>
</dbReference>
<accession>P81417</accession>
<accession>Q963B1</accession>
<protein>
    <recommendedName>
        <fullName>Cecropin-A1</fullName>
    </recommendedName>
    <alternativeName>
        <fullName>AalCecA</fullName>
    </alternativeName>
    <alternativeName>
        <fullName>Cecropin-A</fullName>
    </alternativeName>
</protein>
<comment type="function">
    <text>Cecropins have lytic and antibacterial activity against several Gram-positive and Gram-negative bacteria.</text>
</comment>
<comment type="subcellular location">
    <subcellularLocation>
        <location>Secreted</location>
    </subcellularLocation>
</comment>
<comment type="similarity">
    <text evidence="2">Belongs to the cecropin family.</text>
</comment>
<keyword id="KW-0044">Antibiotic</keyword>
<keyword id="KW-0929">Antimicrobial</keyword>
<keyword id="KW-0903">Direct protein sequencing</keyword>
<keyword id="KW-0391">Immunity</keyword>
<keyword id="KW-0399">Innate immunity</keyword>
<keyword id="KW-0964">Secreted</keyword>
<keyword id="KW-0732">Signal</keyword>
<organism>
    <name type="scientific">Aedes albopictus</name>
    <name type="common">Asian tiger mosquito</name>
    <name type="synonym">Stegomyia albopicta</name>
    <dbReference type="NCBI Taxonomy" id="7160"/>
    <lineage>
        <taxon>Eukaryota</taxon>
        <taxon>Metazoa</taxon>
        <taxon>Ecdysozoa</taxon>
        <taxon>Arthropoda</taxon>
        <taxon>Hexapoda</taxon>
        <taxon>Insecta</taxon>
        <taxon>Pterygota</taxon>
        <taxon>Neoptera</taxon>
        <taxon>Endopterygota</taxon>
        <taxon>Diptera</taxon>
        <taxon>Nematocera</taxon>
        <taxon>Culicoidea</taxon>
        <taxon>Culicidae</taxon>
        <taxon>Culicinae</taxon>
        <taxon>Aedini</taxon>
        <taxon>Aedes</taxon>
        <taxon>Stegomyia</taxon>
    </lineage>
</organism>
<evidence type="ECO:0000269" key="1">
    <source>
    </source>
</evidence>
<evidence type="ECO:0000305" key="2"/>
<proteinExistence type="evidence at protein level"/>
<name>CECA1_AEDAL</name>